<evidence type="ECO:0000255" key="1">
    <source>
        <dbReference type="HAMAP-Rule" id="MF_00491"/>
    </source>
</evidence>
<evidence type="ECO:0000269" key="2">
    <source ref="2"/>
</evidence>
<name>NU4C_PHAVU</name>
<organism>
    <name type="scientific">Phaseolus vulgaris</name>
    <name type="common">Kidney bean</name>
    <name type="synonym">French bean</name>
    <dbReference type="NCBI Taxonomy" id="3885"/>
    <lineage>
        <taxon>Eukaryota</taxon>
        <taxon>Viridiplantae</taxon>
        <taxon>Streptophyta</taxon>
        <taxon>Embryophyta</taxon>
        <taxon>Tracheophyta</taxon>
        <taxon>Spermatophyta</taxon>
        <taxon>Magnoliopsida</taxon>
        <taxon>eudicotyledons</taxon>
        <taxon>Gunneridae</taxon>
        <taxon>Pentapetalae</taxon>
        <taxon>rosids</taxon>
        <taxon>fabids</taxon>
        <taxon>Fabales</taxon>
        <taxon>Fabaceae</taxon>
        <taxon>Papilionoideae</taxon>
        <taxon>50 kb inversion clade</taxon>
        <taxon>NPAAA clade</taxon>
        <taxon>indigoferoid/millettioid clade</taxon>
        <taxon>Phaseoleae</taxon>
        <taxon>Phaseolus</taxon>
    </lineage>
</organism>
<proteinExistence type="evidence at transcript level"/>
<accession>A4GGE6</accession>
<accession>A8W848</accession>
<dbReference type="EC" id="7.1.1.-" evidence="1"/>
<dbReference type="EMBL" id="DQ886273">
    <property type="protein sequence ID" value="ABH88128.1"/>
    <property type="status" value="ALT_SEQ"/>
    <property type="molecule type" value="Genomic_DNA"/>
</dbReference>
<dbReference type="EMBL" id="EU196765">
    <property type="protein sequence ID" value="ABW22818.1"/>
    <property type="molecule type" value="Genomic_DNA"/>
</dbReference>
<dbReference type="RefSeq" id="YP_001122847.2">
    <property type="nucleotide sequence ID" value="NC_009259.1"/>
</dbReference>
<dbReference type="SMR" id="A4GGE6"/>
<dbReference type="GeneID" id="4961794"/>
<dbReference type="KEGG" id="pvu:4961794"/>
<dbReference type="eggNOG" id="KOG4845">
    <property type="taxonomic scope" value="Eukaryota"/>
</dbReference>
<dbReference type="GO" id="GO:0009535">
    <property type="term" value="C:chloroplast thylakoid membrane"/>
    <property type="evidence" value="ECO:0007669"/>
    <property type="project" value="UniProtKB-SubCell"/>
</dbReference>
<dbReference type="GO" id="GO:0008137">
    <property type="term" value="F:NADH dehydrogenase (ubiquinone) activity"/>
    <property type="evidence" value="ECO:0007669"/>
    <property type="project" value="InterPro"/>
</dbReference>
<dbReference type="GO" id="GO:0048039">
    <property type="term" value="F:ubiquinone binding"/>
    <property type="evidence" value="ECO:0007669"/>
    <property type="project" value="TreeGrafter"/>
</dbReference>
<dbReference type="GO" id="GO:0042773">
    <property type="term" value="P:ATP synthesis coupled electron transport"/>
    <property type="evidence" value="ECO:0007669"/>
    <property type="project" value="InterPro"/>
</dbReference>
<dbReference type="GO" id="GO:0015990">
    <property type="term" value="P:electron transport coupled proton transport"/>
    <property type="evidence" value="ECO:0007669"/>
    <property type="project" value="TreeGrafter"/>
</dbReference>
<dbReference type="HAMAP" id="MF_00491">
    <property type="entry name" value="NDH1_NuoM"/>
    <property type="match status" value="1"/>
</dbReference>
<dbReference type="InterPro" id="IPR022997">
    <property type="entry name" value="NADH_Q_OxRdtase_chain4"/>
</dbReference>
<dbReference type="InterPro" id="IPR010227">
    <property type="entry name" value="NADH_Q_OxRdtase_chainM/4"/>
</dbReference>
<dbReference type="InterPro" id="IPR003918">
    <property type="entry name" value="NADH_UbQ_OxRdtase"/>
</dbReference>
<dbReference type="InterPro" id="IPR001750">
    <property type="entry name" value="ND/Mrp_TM"/>
</dbReference>
<dbReference type="NCBIfam" id="TIGR01972">
    <property type="entry name" value="NDH_I_M"/>
    <property type="match status" value="1"/>
</dbReference>
<dbReference type="PANTHER" id="PTHR43507:SF21">
    <property type="entry name" value="NAD(P)H-QUINONE OXIDOREDUCTASE CHAIN 4, CHLOROPLASTIC"/>
    <property type="match status" value="1"/>
</dbReference>
<dbReference type="PANTHER" id="PTHR43507">
    <property type="entry name" value="NADH-UBIQUINONE OXIDOREDUCTASE CHAIN 4"/>
    <property type="match status" value="1"/>
</dbReference>
<dbReference type="Pfam" id="PF00361">
    <property type="entry name" value="Proton_antipo_M"/>
    <property type="match status" value="1"/>
</dbReference>
<dbReference type="PRINTS" id="PR01437">
    <property type="entry name" value="NUOXDRDTASE4"/>
</dbReference>
<reference key="1">
    <citation type="journal article" date="2007" name="BMC Genomics">
        <title>Rapid evolutionary change of common bean (Phaseolus vulgaris L) plastome, and the genomic diversification of legume chloroplasts.</title>
        <authorList>
            <person name="Guo X."/>
            <person name="Castillo-Ramirez S."/>
            <person name="Gonzalez V."/>
            <person name="Bustos P."/>
            <person name="Fernandez-Vazquez J.L."/>
            <person name="Santamaria R.I."/>
            <person name="Arellano J."/>
            <person name="Cevallos M.A."/>
            <person name="Davila G."/>
        </authorList>
    </citation>
    <scope>NUCLEOTIDE SEQUENCE [LARGE SCALE GENOMIC DNA]</scope>
    <source>
        <strain>cv. Negro Jamapa</strain>
    </source>
</reference>
<reference key="2">
    <citation type="submission" date="2007-10" db="EMBL/GenBank/DDBJ databases">
        <title>Complete nucleotide sequence of the plastid genome of the common bean, Phaseolus vulgaris.</title>
        <authorList>
            <person name="Moore M.J."/>
            <person name="Triplett E.W."/>
            <person name="Broughton W.J."/>
            <person name="Soltis P.S."/>
            <person name="Soltis D.E."/>
        </authorList>
    </citation>
    <scope>NUCLEOTIDE SEQUENCE [LARGE SCALE GENOMIC DNA]</scope>
    <scope>RNA EDITING</scope>
</reference>
<protein>
    <recommendedName>
        <fullName evidence="1">NAD(P)H-quinone oxidoreductase chain 4, chloroplastic</fullName>
        <ecNumber evidence="1">7.1.1.-</ecNumber>
    </recommendedName>
    <alternativeName>
        <fullName evidence="1">NAD(P)H dehydrogenase, chain 4</fullName>
    </alternativeName>
    <alternativeName>
        <fullName evidence="1">NADH-plastoquinone oxidoreductase chain 4</fullName>
    </alternativeName>
</protein>
<sequence length="498" mass="55920">MNDFPWLTTVVVLPIVGGSLIVLFPHKGNKTIKWYTYCICFIDLLLIAYVFCYHFELDDPLIQLTENYKWIHFFDFYWRFGIDGLSLGPILLTGFITTLATLSAQPVTRESKLFYFLMLAMYSGQLGTFSSRDILLFFIMWELELIPVYLLLSMWGGKKRLYSATKFILYTAGSSVFLLLGILGMSLYSSNEPTLNFESLTNQSYPVALEIIFYMGFLIAFAVKSPIIPLHTWLPDTHGEAHYSTCMLLAGILLKMGAYGLVRINMELLSRAHSIFCPWLMLLGSIQIIYAASTSLGQRNVKKRIAYSSVSHMGFLILGIGSISETGLNGAILQIISHGFIGAALFFLAGTSYDRLRLLYLDEMGGMAIPMPKIFTIFTTLSMASLALPGMSGFVAELIVLLGIITNQKYLLITKILITFVTAIGMILTPIYSLSILRQMFYGYKLFNTPNSYFFDSGPRELFISISILIPVISIGIYPDFIFSFSADKVEAILSNFL</sequence>
<comment type="catalytic activity">
    <reaction evidence="1">
        <text>a plastoquinone + NADH + (n+1) H(+)(in) = a plastoquinol + NAD(+) + n H(+)(out)</text>
        <dbReference type="Rhea" id="RHEA:42608"/>
        <dbReference type="Rhea" id="RHEA-COMP:9561"/>
        <dbReference type="Rhea" id="RHEA-COMP:9562"/>
        <dbReference type="ChEBI" id="CHEBI:15378"/>
        <dbReference type="ChEBI" id="CHEBI:17757"/>
        <dbReference type="ChEBI" id="CHEBI:57540"/>
        <dbReference type="ChEBI" id="CHEBI:57945"/>
        <dbReference type="ChEBI" id="CHEBI:62192"/>
    </reaction>
</comment>
<comment type="catalytic activity">
    <reaction evidence="1">
        <text>a plastoquinone + NADPH + (n+1) H(+)(in) = a plastoquinol + NADP(+) + n H(+)(out)</text>
        <dbReference type="Rhea" id="RHEA:42612"/>
        <dbReference type="Rhea" id="RHEA-COMP:9561"/>
        <dbReference type="Rhea" id="RHEA-COMP:9562"/>
        <dbReference type="ChEBI" id="CHEBI:15378"/>
        <dbReference type="ChEBI" id="CHEBI:17757"/>
        <dbReference type="ChEBI" id="CHEBI:57783"/>
        <dbReference type="ChEBI" id="CHEBI:58349"/>
        <dbReference type="ChEBI" id="CHEBI:62192"/>
    </reaction>
</comment>
<comment type="subcellular location">
    <subcellularLocation>
        <location evidence="1">Plastid</location>
        <location evidence="1">Chloroplast thylakoid membrane</location>
        <topology evidence="1">Multi-pass membrane protein</topology>
    </subcellularLocation>
</comment>
<comment type="RNA editing">
    <location>
        <position position="1" evidence="2"/>
    </location>
    <text>The initiator methionine is created by RNA editing.</text>
</comment>
<comment type="similarity">
    <text evidence="1">Belongs to the complex I subunit 4 family.</text>
</comment>
<keyword id="KW-0150">Chloroplast</keyword>
<keyword id="KW-0472">Membrane</keyword>
<keyword id="KW-0520">NAD</keyword>
<keyword id="KW-0521">NADP</keyword>
<keyword id="KW-0934">Plastid</keyword>
<keyword id="KW-0618">Plastoquinone</keyword>
<keyword id="KW-0874">Quinone</keyword>
<keyword id="KW-0691">RNA editing</keyword>
<keyword id="KW-0793">Thylakoid</keyword>
<keyword id="KW-1278">Translocase</keyword>
<keyword id="KW-0812">Transmembrane</keyword>
<keyword id="KW-1133">Transmembrane helix</keyword>
<feature type="chain" id="PRO_0000343301" description="NAD(P)H-quinone oxidoreductase chain 4, chloroplastic">
    <location>
        <begin position="1"/>
        <end position="498"/>
    </location>
</feature>
<feature type="transmembrane region" description="Helical" evidence="1">
    <location>
        <begin position="4"/>
        <end position="24"/>
    </location>
</feature>
<feature type="transmembrane region" description="Helical" evidence="1">
    <location>
        <begin position="37"/>
        <end position="57"/>
    </location>
</feature>
<feature type="transmembrane region" description="Helical" evidence="1">
    <location>
        <begin position="80"/>
        <end position="100"/>
    </location>
</feature>
<feature type="transmembrane region" description="Helical" evidence="1">
    <location>
        <begin position="112"/>
        <end position="129"/>
    </location>
</feature>
<feature type="transmembrane region" description="Helical" evidence="1">
    <location>
        <begin position="134"/>
        <end position="154"/>
    </location>
</feature>
<feature type="transmembrane region" description="Helical" evidence="1">
    <location>
        <begin position="167"/>
        <end position="187"/>
    </location>
</feature>
<feature type="transmembrane region" description="Helical" evidence="1">
    <location>
        <begin position="208"/>
        <end position="228"/>
    </location>
</feature>
<feature type="transmembrane region" description="Helical" evidence="1">
    <location>
        <begin position="242"/>
        <end position="262"/>
    </location>
</feature>
<feature type="transmembrane region" description="Helical" evidence="1">
    <location>
        <begin position="272"/>
        <end position="292"/>
    </location>
</feature>
<feature type="transmembrane region" description="Helical" evidence="1">
    <location>
        <begin position="305"/>
        <end position="325"/>
    </location>
</feature>
<feature type="transmembrane region" description="Helical" evidence="1">
    <location>
        <begin position="330"/>
        <end position="350"/>
    </location>
</feature>
<feature type="transmembrane region" description="Helical" evidence="1">
    <location>
        <begin position="386"/>
        <end position="406"/>
    </location>
</feature>
<feature type="transmembrane region" description="Helical" evidence="1">
    <location>
        <begin position="416"/>
        <end position="436"/>
    </location>
</feature>
<feature type="transmembrane region" description="Helical" evidence="1">
    <location>
        <begin position="463"/>
        <end position="483"/>
    </location>
</feature>
<geneLocation type="chloroplast"/>
<gene>
    <name evidence="1" type="primary">ndhD</name>
</gene>